<feature type="chain" id="PRO_1000194489" description="Ion-translocating oxidoreductase complex subunit B">
    <location>
        <begin position="1"/>
        <end position="188"/>
    </location>
</feature>
<feature type="domain" description="4Fe-4S" evidence="1">
    <location>
        <begin position="29"/>
        <end position="88"/>
    </location>
</feature>
<feature type="domain" description="4Fe-4S ferredoxin-type 1" evidence="1">
    <location>
        <begin position="104"/>
        <end position="133"/>
    </location>
</feature>
<feature type="domain" description="4Fe-4S ferredoxin-type 2" evidence="1">
    <location>
        <begin position="134"/>
        <end position="163"/>
    </location>
</feature>
<feature type="region of interest" description="Hydrophobic" evidence="1">
    <location>
        <begin position="1"/>
        <end position="23"/>
    </location>
</feature>
<feature type="binding site" evidence="1">
    <location>
        <position position="46"/>
    </location>
    <ligand>
        <name>[4Fe-4S] cluster</name>
        <dbReference type="ChEBI" id="CHEBI:49883"/>
        <label>1</label>
    </ligand>
</feature>
<feature type="binding site" evidence="1">
    <location>
        <position position="49"/>
    </location>
    <ligand>
        <name>[4Fe-4S] cluster</name>
        <dbReference type="ChEBI" id="CHEBI:49883"/>
        <label>1</label>
    </ligand>
</feature>
<feature type="binding site" evidence="1">
    <location>
        <position position="54"/>
    </location>
    <ligand>
        <name>[4Fe-4S] cluster</name>
        <dbReference type="ChEBI" id="CHEBI:49883"/>
        <label>1</label>
    </ligand>
</feature>
<feature type="binding site" evidence="1">
    <location>
        <position position="71"/>
    </location>
    <ligand>
        <name>[4Fe-4S] cluster</name>
        <dbReference type="ChEBI" id="CHEBI:49883"/>
        <label>1</label>
    </ligand>
</feature>
<feature type="binding site" evidence="1">
    <location>
        <position position="113"/>
    </location>
    <ligand>
        <name>[4Fe-4S] cluster</name>
        <dbReference type="ChEBI" id="CHEBI:49883"/>
        <label>2</label>
    </ligand>
</feature>
<feature type="binding site" evidence="1">
    <location>
        <position position="116"/>
    </location>
    <ligand>
        <name>[4Fe-4S] cluster</name>
        <dbReference type="ChEBI" id="CHEBI:49883"/>
        <label>2</label>
    </ligand>
</feature>
<feature type="binding site" evidence="1">
    <location>
        <position position="119"/>
    </location>
    <ligand>
        <name>[4Fe-4S] cluster</name>
        <dbReference type="ChEBI" id="CHEBI:49883"/>
        <label>2</label>
    </ligand>
</feature>
<feature type="binding site" evidence="1">
    <location>
        <position position="123"/>
    </location>
    <ligand>
        <name>[4Fe-4S] cluster</name>
        <dbReference type="ChEBI" id="CHEBI:49883"/>
        <label>3</label>
    </ligand>
</feature>
<feature type="binding site" evidence="1">
    <location>
        <position position="143"/>
    </location>
    <ligand>
        <name>[4Fe-4S] cluster</name>
        <dbReference type="ChEBI" id="CHEBI:49883"/>
        <label>3</label>
    </ligand>
</feature>
<feature type="binding site" evidence="1">
    <location>
        <position position="146"/>
    </location>
    <ligand>
        <name>[4Fe-4S] cluster</name>
        <dbReference type="ChEBI" id="CHEBI:49883"/>
        <label>3</label>
    </ligand>
</feature>
<feature type="binding site" evidence="1">
    <location>
        <position position="149"/>
    </location>
    <ligand>
        <name>[4Fe-4S] cluster</name>
        <dbReference type="ChEBI" id="CHEBI:49883"/>
        <label>3</label>
    </ligand>
</feature>
<feature type="binding site" evidence="1">
    <location>
        <position position="153"/>
    </location>
    <ligand>
        <name>[4Fe-4S] cluster</name>
        <dbReference type="ChEBI" id="CHEBI:49883"/>
        <label>2</label>
    </ligand>
</feature>
<gene>
    <name evidence="1" type="primary">rnfB</name>
    <name type="ordered locus">RHOS4_32410</name>
    <name type="ordered locus">RSP_3193</name>
</gene>
<dbReference type="EC" id="7.-.-.-" evidence="1"/>
<dbReference type="EMBL" id="CP000144">
    <property type="protein sequence ID" value="ABA80809.1"/>
    <property type="molecule type" value="Genomic_DNA"/>
</dbReference>
<dbReference type="RefSeq" id="WP_011339116.1">
    <property type="nucleotide sequence ID" value="NC_007494.2"/>
</dbReference>
<dbReference type="RefSeq" id="YP_354710.1">
    <property type="nucleotide sequence ID" value="NC_007494.2"/>
</dbReference>
<dbReference type="STRING" id="272943.RSP_3193"/>
<dbReference type="EnsemblBacteria" id="ABA80809">
    <property type="protein sequence ID" value="ABA80809"/>
    <property type="gene ID" value="RSP_3193"/>
</dbReference>
<dbReference type="GeneID" id="3721801"/>
<dbReference type="KEGG" id="rsp:RSP_3193"/>
<dbReference type="PATRIC" id="fig|272943.9.peg.3623"/>
<dbReference type="eggNOG" id="COG2878">
    <property type="taxonomic scope" value="Bacteria"/>
</dbReference>
<dbReference type="OrthoDB" id="9800445at2"/>
<dbReference type="PhylomeDB" id="Q3IXC5"/>
<dbReference type="Proteomes" id="UP000002703">
    <property type="component" value="Chromosome 2"/>
</dbReference>
<dbReference type="GO" id="GO:0005886">
    <property type="term" value="C:plasma membrane"/>
    <property type="evidence" value="ECO:0007669"/>
    <property type="project" value="InterPro"/>
</dbReference>
<dbReference type="GO" id="GO:0042717">
    <property type="term" value="C:plasma membrane-derived chromatophore membrane"/>
    <property type="evidence" value="ECO:0007669"/>
    <property type="project" value="UniProtKB-SubCell"/>
</dbReference>
<dbReference type="GO" id="GO:0051539">
    <property type="term" value="F:4 iron, 4 sulfur cluster binding"/>
    <property type="evidence" value="ECO:0007669"/>
    <property type="project" value="UniProtKB-UniRule"/>
</dbReference>
<dbReference type="GO" id="GO:0009055">
    <property type="term" value="F:electron transfer activity"/>
    <property type="evidence" value="ECO:0007669"/>
    <property type="project" value="InterPro"/>
</dbReference>
<dbReference type="GO" id="GO:0046872">
    <property type="term" value="F:metal ion binding"/>
    <property type="evidence" value="ECO:0007669"/>
    <property type="project" value="UniProtKB-KW"/>
</dbReference>
<dbReference type="GO" id="GO:0022900">
    <property type="term" value="P:electron transport chain"/>
    <property type="evidence" value="ECO:0007669"/>
    <property type="project" value="UniProtKB-UniRule"/>
</dbReference>
<dbReference type="GO" id="GO:0009399">
    <property type="term" value="P:nitrogen fixation"/>
    <property type="evidence" value="ECO:0007669"/>
    <property type="project" value="UniProtKB-UniRule"/>
</dbReference>
<dbReference type="Gene3D" id="3.30.70.20">
    <property type="match status" value="1"/>
</dbReference>
<dbReference type="Gene3D" id="1.10.15.40">
    <property type="entry name" value="Electron transport complex subunit B, putative Fe-S cluster"/>
    <property type="match status" value="1"/>
</dbReference>
<dbReference type="HAMAP" id="MF_00463">
    <property type="entry name" value="RsxB_RnfB"/>
    <property type="match status" value="1"/>
</dbReference>
<dbReference type="InterPro" id="IPR007202">
    <property type="entry name" value="4Fe-4S_dom"/>
</dbReference>
<dbReference type="InterPro" id="IPR017896">
    <property type="entry name" value="4Fe4S_Fe-S-bd"/>
</dbReference>
<dbReference type="InterPro" id="IPR017900">
    <property type="entry name" value="4Fe4S_Fe_S_CS"/>
</dbReference>
<dbReference type="InterPro" id="IPR050395">
    <property type="entry name" value="4Fe4S_Ferredoxin_RnfB"/>
</dbReference>
<dbReference type="InterPro" id="IPR010207">
    <property type="entry name" value="Elect_transpt_cplx_RnfB/RsxB"/>
</dbReference>
<dbReference type="InterPro" id="IPR016463">
    <property type="entry name" value="RnfB/RsxB_Proteobac"/>
</dbReference>
<dbReference type="NCBIfam" id="TIGR01944">
    <property type="entry name" value="rnfB"/>
    <property type="match status" value="1"/>
</dbReference>
<dbReference type="PANTHER" id="PTHR43560">
    <property type="entry name" value="ION-TRANSLOCATING OXIDOREDUCTASE COMPLEX SUBUNIT B"/>
    <property type="match status" value="1"/>
</dbReference>
<dbReference type="PANTHER" id="PTHR43560:SF1">
    <property type="entry name" value="ION-TRANSLOCATING OXIDOREDUCTASE COMPLEX SUBUNIT B"/>
    <property type="match status" value="1"/>
</dbReference>
<dbReference type="Pfam" id="PF14697">
    <property type="entry name" value="Fer4_21"/>
    <property type="match status" value="1"/>
</dbReference>
<dbReference type="Pfam" id="PF04060">
    <property type="entry name" value="FeS"/>
    <property type="match status" value="1"/>
</dbReference>
<dbReference type="PIRSF" id="PIRSF005784">
    <property type="entry name" value="Elect_transpt_RnfB"/>
    <property type="match status" value="1"/>
</dbReference>
<dbReference type="SUPFAM" id="SSF54862">
    <property type="entry name" value="4Fe-4S ferredoxins"/>
    <property type="match status" value="1"/>
</dbReference>
<dbReference type="PROSITE" id="PS51656">
    <property type="entry name" value="4FE4S"/>
    <property type="match status" value="1"/>
</dbReference>
<dbReference type="PROSITE" id="PS00198">
    <property type="entry name" value="4FE4S_FER_1"/>
    <property type="match status" value="2"/>
</dbReference>
<dbReference type="PROSITE" id="PS51379">
    <property type="entry name" value="4FE4S_FER_2"/>
    <property type="match status" value="2"/>
</dbReference>
<organism>
    <name type="scientific">Cereibacter sphaeroides (strain ATCC 17023 / DSM 158 / JCM 6121 / CCUG 31486 / LMG 2827 / NBRC 12203 / NCIMB 8253 / ATH 2.4.1.)</name>
    <name type="common">Rhodobacter sphaeroides</name>
    <dbReference type="NCBI Taxonomy" id="272943"/>
    <lineage>
        <taxon>Bacteria</taxon>
        <taxon>Pseudomonadati</taxon>
        <taxon>Pseudomonadota</taxon>
        <taxon>Alphaproteobacteria</taxon>
        <taxon>Rhodobacterales</taxon>
        <taxon>Paracoccaceae</taxon>
        <taxon>Cereibacter</taxon>
    </lineage>
</organism>
<keyword id="KW-0004">4Fe-4S</keyword>
<keyword id="KW-0249">Electron transport</keyword>
<keyword id="KW-0408">Iron</keyword>
<keyword id="KW-0411">Iron-sulfur</keyword>
<keyword id="KW-0472">Membrane</keyword>
<keyword id="KW-0479">Metal-binding</keyword>
<keyword id="KW-0535">Nitrogen fixation</keyword>
<keyword id="KW-1185">Reference proteome</keyword>
<keyword id="KW-0677">Repeat</keyword>
<keyword id="KW-1278">Translocase</keyword>
<keyword id="KW-0813">Transport</keyword>
<reference key="1">
    <citation type="submission" date="2005-09" db="EMBL/GenBank/DDBJ databases">
        <title>Complete sequence of chromosome 2 of Rhodobacter sphaeroides 2.4.1.</title>
        <authorList>
            <person name="Copeland A."/>
            <person name="Lucas S."/>
            <person name="Lapidus A."/>
            <person name="Barry K."/>
            <person name="Detter J.C."/>
            <person name="Glavina T."/>
            <person name="Hammon N."/>
            <person name="Israni S."/>
            <person name="Pitluck S."/>
            <person name="Richardson P."/>
            <person name="Mackenzie C."/>
            <person name="Choudhary M."/>
            <person name="Larimer F."/>
            <person name="Hauser L.J."/>
            <person name="Land M."/>
            <person name="Donohue T.J."/>
            <person name="Kaplan S."/>
        </authorList>
    </citation>
    <scope>NUCLEOTIDE SEQUENCE [LARGE SCALE GENOMIC DNA]</scope>
    <source>
        <strain>ATCC 17023 / DSM 158 / JCM 6121 / CCUG 31486 / LMG 2827 / NBRC 12203 / NCIMB 8253 / ATH 2.4.1.</strain>
    </source>
</reference>
<name>RNFB_CERS4</name>
<evidence type="ECO:0000255" key="1">
    <source>
        <dbReference type="HAMAP-Rule" id="MF_00463"/>
    </source>
</evidence>
<sequence length="188" mass="19249">MIEAAVSMSALGLGLGLLLGVAARRFHVESPPIVDAIEGILPGTNCGACGYPGCRGLAEAMSEGAAPVTACAPGGRDVALALAAIVETDGGGGAVPGMAEAEPTVAFIFEDHCTGCMRCFKRCPTDAIIGANRQIHTVVTDACIGCNACIEACPTEAIVARVKPKTLKSWYWDKPRTAFEARGTEVAA</sequence>
<proteinExistence type="inferred from homology"/>
<protein>
    <recommendedName>
        <fullName evidence="1">Ion-translocating oxidoreductase complex subunit B</fullName>
        <ecNumber evidence="1">7.-.-.-</ecNumber>
    </recommendedName>
    <alternativeName>
        <fullName evidence="1">Rnf electron transport complex subunit B</fullName>
    </alternativeName>
</protein>
<comment type="function">
    <text evidence="1">Part of a membrane-bound complex that couples electron transfer with translocation of ions across the membrane.</text>
</comment>
<comment type="cofactor">
    <cofactor evidence="1">
        <name>[4Fe-4S] cluster</name>
        <dbReference type="ChEBI" id="CHEBI:49883"/>
    </cofactor>
    <text evidence="1">Binds 3 [4Fe-4S] clusters.</text>
</comment>
<comment type="subunit">
    <text evidence="1">The complex is composed of six subunits: RnfA, RnfB, RnfC, RnfD, RnfE and RnfG.</text>
</comment>
<comment type="subcellular location">
    <subcellularLocation>
        <location evidence="1">Cellular chromatophore membrane</location>
        <topology evidence="1">Peripheral membrane protein</topology>
        <orientation evidence="1">Cytoplasmic side</orientation>
    </subcellularLocation>
</comment>
<comment type="similarity">
    <text evidence="1">Belongs to the 4Fe4S bacterial-type ferredoxin family. RnfB subfamily.</text>
</comment>
<accession>Q3IXC5</accession>